<accession>Q6GBV2</accession>
<protein>
    <recommendedName>
        <fullName evidence="1">Protein translocase subunit SecE</fullName>
    </recommendedName>
</protein>
<dbReference type="EMBL" id="BX571857">
    <property type="protein sequence ID" value="CAG42268.1"/>
    <property type="molecule type" value="Genomic_DNA"/>
</dbReference>
<dbReference type="RefSeq" id="WP_001074473.1">
    <property type="nucleotide sequence ID" value="NC_002953.3"/>
</dbReference>
<dbReference type="SMR" id="Q6GBV2"/>
<dbReference type="GeneID" id="98344869"/>
<dbReference type="KEGG" id="sas:SAS0493"/>
<dbReference type="HOGENOM" id="CLU_113663_8_2_9"/>
<dbReference type="GO" id="GO:0005886">
    <property type="term" value="C:plasma membrane"/>
    <property type="evidence" value="ECO:0007669"/>
    <property type="project" value="UniProtKB-SubCell"/>
</dbReference>
<dbReference type="GO" id="GO:0008320">
    <property type="term" value="F:protein transmembrane transporter activity"/>
    <property type="evidence" value="ECO:0007669"/>
    <property type="project" value="UniProtKB-UniRule"/>
</dbReference>
<dbReference type="GO" id="GO:0065002">
    <property type="term" value="P:intracellular protein transmembrane transport"/>
    <property type="evidence" value="ECO:0007669"/>
    <property type="project" value="UniProtKB-UniRule"/>
</dbReference>
<dbReference type="GO" id="GO:0009306">
    <property type="term" value="P:protein secretion"/>
    <property type="evidence" value="ECO:0007669"/>
    <property type="project" value="UniProtKB-UniRule"/>
</dbReference>
<dbReference type="GO" id="GO:0006605">
    <property type="term" value="P:protein targeting"/>
    <property type="evidence" value="ECO:0007669"/>
    <property type="project" value="UniProtKB-UniRule"/>
</dbReference>
<dbReference type="GO" id="GO:0043952">
    <property type="term" value="P:protein transport by the Sec complex"/>
    <property type="evidence" value="ECO:0007669"/>
    <property type="project" value="UniProtKB-UniRule"/>
</dbReference>
<dbReference type="Gene3D" id="1.20.5.1030">
    <property type="entry name" value="Preprotein translocase secy subunit"/>
    <property type="match status" value="1"/>
</dbReference>
<dbReference type="HAMAP" id="MF_00422">
    <property type="entry name" value="SecE"/>
    <property type="match status" value="1"/>
</dbReference>
<dbReference type="InterPro" id="IPR005807">
    <property type="entry name" value="SecE_bac"/>
</dbReference>
<dbReference type="InterPro" id="IPR038379">
    <property type="entry name" value="SecE_sf"/>
</dbReference>
<dbReference type="InterPro" id="IPR001901">
    <property type="entry name" value="Translocase_SecE/Sec61-g"/>
</dbReference>
<dbReference type="NCBIfam" id="TIGR00964">
    <property type="entry name" value="secE_bact"/>
    <property type="match status" value="1"/>
</dbReference>
<dbReference type="PANTHER" id="PTHR33910">
    <property type="entry name" value="PROTEIN TRANSLOCASE SUBUNIT SECE"/>
    <property type="match status" value="1"/>
</dbReference>
<dbReference type="PANTHER" id="PTHR33910:SF1">
    <property type="entry name" value="PROTEIN TRANSLOCASE SUBUNIT SECE"/>
    <property type="match status" value="1"/>
</dbReference>
<dbReference type="Pfam" id="PF00584">
    <property type="entry name" value="SecE"/>
    <property type="match status" value="1"/>
</dbReference>
<dbReference type="PROSITE" id="PS01067">
    <property type="entry name" value="SECE_SEC61G"/>
    <property type="match status" value="1"/>
</dbReference>
<organism>
    <name type="scientific">Staphylococcus aureus (strain MSSA476)</name>
    <dbReference type="NCBI Taxonomy" id="282459"/>
    <lineage>
        <taxon>Bacteria</taxon>
        <taxon>Bacillati</taxon>
        <taxon>Bacillota</taxon>
        <taxon>Bacilli</taxon>
        <taxon>Bacillales</taxon>
        <taxon>Staphylococcaceae</taxon>
        <taxon>Staphylococcus</taxon>
    </lineage>
</organism>
<comment type="function">
    <text evidence="1">Essential subunit of the Sec protein translocation channel SecYEG. Clamps together the 2 halves of SecY. May contact the channel plug during translocation.</text>
</comment>
<comment type="subunit">
    <text evidence="1">Component of the Sec protein translocase complex. Heterotrimer consisting of SecY, SecE and SecG subunits. The heterotrimers can form oligomers, although 1 heterotrimer is thought to be able to translocate proteins. Interacts with the ribosome. Interacts with SecDF, and other proteins may be involved. Interacts with SecA.</text>
</comment>
<comment type="subcellular location">
    <subcellularLocation>
        <location evidence="1">Cell membrane</location>
        <topology evidence="1">Single-pass membrane protein</topology>
    </subcellularLocation>
</comment>
<comment type="similarity">
    <text evidence="1">Belongs to the SecE/SEC61-gamma family.</text>
</comment>
<evidence type="ECO:0000255" key="1">
    <source>
        <dbReference type="HAMAP-Rule" id="MF_00422"/>
    </source>
</evidence>
<proteinExistence type="inferred from homology"/>
<keyword id="KW-1003">Cell membrane</keyword>
<keyword id="KW-0472">Membrane</keyword>
<keyword id="KW-0653">Protein transport</keyword>
<keyword id="KW-0811">Translocation</keyword>
<keyword id="KW-0812">Transmembrane</keyword>
<keyword id="KW-1133">Transmembrane helix</keyword>
<keyword id="KW-0813">Transport</keyword>
<name>SECE_STAAS</name>
<gene>
    <name evidence="1" type="primary">secE</name>
    <name type="ordered locus">SAS0493</name>
</gene>
<reference key="1">
    <citation type="journal article" date="2004" name="Proc. Natl. Acad. Sci. U.S.A.">
        <title>Complete genomes of two clinical Staphylococcus aureus strains: evidence for the rapid evolution of virulence and drug resistance.</title>
        <authorList>
            <person name="Holden M.T.G."/>
            <person name="Feil E.J."/>
            <person name="Lindsay J.A."/>
            <person name="Peacock S.J."/>
            <person name="Day N.P.J."/>
            <person name="Enright M.C."/>
            <person name="Foster T.J."/>
            <person name="Moore C.E."/>
            <person name="Hurst L."/>
            <person name="Atkin R."/>
            <person name="Barron A."/>
            <person name="Bason N."/>
            <person name="Bentley S.D."/>
            <person name="Chillingworth C."/>
            <person name="Chillingworth T."/>
            <person name="Churcher C."/>
            <person name="Clark L."/>
            <person name="Corton C."/>
            <person name="Cronin A."/>
            <person name="Doggett J."/>
            <person name="Dowd L."/>
            <person name="Feltwell T."/>
            <person name="Hance Z."/>
            <person name="Harris B."/>
            <person name="Hauser H."/>
            <person name="Holroyd S."/>
            <person name="Jagels K."/>
            <person name="James K.D."/>
            <person name="Lennard N."/>
            <person name="Line A."/>
            <person name="Mayes R."/>
            <person name="Moule S."/>
            <person name="Mungall K."/>
            <person name="Ormond D."/>
            <person name="Quail M.A."/>
            <person name="Rabbinowitsch E."/>
            <person name="Rutherford K.M."/>
            <person name="Sanders M."/>
            <person name="Sharp S."/>
            <person name="Simmonds M."/>
            <person name="Stevens K."/>
            <person name="Whitehead S."/>
            <person name="Barrell B.G."/>
            <person name="Spratt B.G."/>
            <person name="Parkhill J."/>
        </authorList>
    </citation>
    <scope>NUCLEOTIDE SEQUENCE [LARGE SCALE GENOMIC DNA]</scope>
    <source>
        <strain>MSSA476</strain>
    </source>
</reference>
<sequence length="60" mass="6932">MAKKESFFKGVKSEMEKTSWPTKEELFKYTVIVVSTVIFFLVFFYALDLGITALKNLLFG</sequence>
<feature type="chain" id="PRO_0000104177" description="Protein translocase subunit SecE">
    <location>
        <begin position="1"/>
        <end position="60"/>
    </location>
</feature>
<feature type="transmembrane region" description="Helical" evidence="1">
    <location>
        <begin position="31"/>
        <end position="51"/>
    </location>
</feature>